<protein>
    <recommendedName>
        <fullName evidence="1">Large ribosomal subunit protein uL22</fullName>
    </recommendedName>
    <alternativeName>
        <fullName evidence="2">50S ribosomal protein L22</fullName>
    </alternativeName>
</protein>
<comment type="function">
    <text evidence="1">This protein binds specifically to 23S rRNA; its binding is stimulated by other ribosomal proteins, e.g. L4, L17, and L20. It is important during the early stages of 50S assembly. It makes multiple contacts with different domains of the 23S rRNA in the assembled 50S subunit and ribosome (By similarity).</text>
</comment>
<comment type="function">
    <text evidence="1">The globular domain of the protein is located near the polypeptide exit tunnel on the outside of the subunit, while an extended beta-hairpin is found that lines the wall of the exit tunnel in the center of the 70S ribosome.</text>
</comment>
<comment type="subunit">
    <text evidence="1">Part of the 50S ribosomal subunit.</text>
</comment>
<comment type="similarity">
    <text evidence="1">Belongs to the universal ribosomal protein uL22 family.</text>
</comment>
<accession>Q99S26</accession>
<reference key="1">
    <citation type="journal article" date="2001" name="Lancet">
        <title>Whole genome sequencing of meticillin-resistant Staphylococcus aureus.</title>
        <authorList>
            <person name="Kuroda M."/>
            <person name="Ohta T."/>
            <person name="Uchiyama I."/>
            <person name="Baba T."/>
            <person name="Yuzawa H."/>
            <person name="Kobayashi I."/>
            <person name="Cui L."/>
            <person name="Oguchi A."/>
            <person name="Aoki K."/>
            <person name="Nagai Y."/>
            <person name="Lian J.-Q."/>
            <person name="Ito T."/>
            <person name="Kanamori M."/>
            <person name="Matsumaru H."/>
            <person name="Maruyama A."/>
            <person name="Murakami H."/>
            <person name="Hosoyama A."/>
            <person name="Mizutani-Ui Y."/>
            <person name="Takahashi N.K."/>
            <person name="Sawano T."/>
            <person name="Inoue R."/>
            <person name="Kaito C."/>
            <person name="Sekimizu K."/>
            <person name="Hirakawa H."/>
            <person name="Kuhara S."/>
            <person name="Goto S."/>
            <person name="Yabuzaki J."/>
            <person name="Kanehisa M."/>
            <person name="Yamashita A."/>
            <person name="Oshima K."/>
            <person name="Furuya K."/>
            <person name="Yoshino C."/>
            <person name="Shiba T."/>
            <person name="Hattori M."/>
            <person name="Ogasawara N."/>
            <person name="Hayashi H."/>
            <person name="Hiramatsu K."/>
        </authorList>
    </citation>
    <scope>NUCLEOTIDE SEQUENCE [LARGE SCALE GENOMIC DNA]</scope>
    <source>
        <strain>Mu50 / ATCC 700699</strain>
    </source>
</reference>
<dbReference type="EMBL" id="BA000017">
    <property type="protein sequence ID" value="BAB58407.1"/>
    <property type="molecule type" value="Genomic_DNA"/>
</dbReference>
<dbReference type="RefSeq" id="WP_000387527.1">
    <property type="nucleotide sequence ID" value="NC_002758.2"/>
</dbReference>
<dbReference type="SMR" id="Q99S26"/>
<dbReference type="GeneID" id="98346557"/>
<dbReference type="KEGG" id="sav:SAV2245"/>
<dbReference type="HOGENOM" id="CLU_083987_3_3_9"/>
<dbReference type="PhylomeDB" id="Q99S26"/>
<dbReference type="Proteomes" id="UP000002481">
    <property type="component" value="Chromosome"/>
</dbReference>
<dbReference type="GO" id="GO:0022625">
    <property type="term" value="C:cytosolic large ribosomal subunit"/>
    <property type="evidence" value="ECO:0007669"/>
    <property type="project" value="TreeGrafter"/>
</dbReference>
<dbReference type="GO" id="GO:0019843">
    <property type="term" value="F:rRNA binding"/>
    <property type="evidence" value="ECO:0007669"/>
    <property type="project" value="UniProtKB-UniRule"/>
</dbReference>
<dbReference type="GO" id="GO:0003735">
    <property type="term" value="F:structural constituent of ribosome"/>
    <property type="evidence" value="ECO:0007669"/>
    <property type="project" value="InterPro"/>
</dbReference>
<dbReference type="GO" id="GO:0006412">
    <property type="term" value="P:translation"/>
    <property type="evidence" value="ECO:0007669"/>
    <property type="project" value="UniProtKB-UniRule"/>
</dbReference>
<dbReference type="CDD" id="cd00336">
    <property type="entry name" value="Ribosomal_L22"/>
    <property type="match status" value="1"/>
</dbReference>
<dbReference type="FunFam" id="3.90.470.10:FF:000001">
    <property type="entry name" value="50S ribosomal protein L22"/>
    <property type="match status" value="1"/>
</dbReference>
<dbReference type="Gene3D" id="3.90.470.10">
    <property type="entry name" value="Ribosomal protein L22/L17"/>
    <property type="match status" value="1"/>
</dbReference>
<dbReference type="HAMAP" id="MF_01331_B">
    <property type="entry name" value="Ribosomal_uL22_B"/>
    <property type="match status" value="1"/>
</dbReference>
<dbReference type="InterPro" id="IPR001063">
    <property type="entry name" value="Ribosomal_uL22"/>
</dbReference>
<dbReference type="InterPro" id="IPR005727">
    <property type="entry name" value="Ribosomal_uL22_bac/chlpt-type"/>
</dbReference>
<dbReference type="InterPro" id="IPR047867">
    <property type="entry name" value="Ribosomal_uL22_bac/org-type"/>
</dbReference>
<dbReference type="InterPro" id="IPR018260">
    <property type="entry name" value="Ribosomal_uL22_CS"/>
</dbReference>
<dbReference type="InterPro" id="IPR036394">
    <property type="entry name" value="Ribosomal_uL22_sf"/>
</dbReference>
<dbReference type="NCBIfam" id="TIGR01044">
    <property type="entry name" value="rplV_bact"/>
    <property type="match status" value="1"/>
</dbReference>
<dbReference type="PANTHER" id="PTHR13501">
    <property type="entry name" value="CHLOROPLAST 50S RIBOSOMAL PROTEIN L22-RELATED"/>
    <property type="match status" value="1"/>
</dbReference>
<dbReference type="PANTHER" id="PTHR13501:SF8">
    <property type="entry name" value="LARGE RIBOSOMAL SUBUNIT PROTEIN UL22M"/>
    <property type="match status" value="1"/>
</dbReference>
<dbReference type="Pfam" id="PF00237">
    <property type="entry name" value="Ribosomal_L22"/>
    <property type="match status" value="1"/>
</dbReference>
<dbReference type="SUPFAM" id="SSF54843">
    <property type="entry name" value="Ribosomal protein L22"/>
    <property type="match status" value="1"/>
</dbReference>
<dbReference type="PROSITE" id="PS00464">
    <property type="entry name" value="RIBOSOMAL_L22"/>
    <property type="match status" value="1"/>
</dbReference>
<organism>
    <name type="scientific">Staphylococcus aureus (strain Mu50 / ATCC 700699)</name>
    <dbReference type="NCBI Taxonomy" id="158878"/>
    <lineage>
        <taxon>Bacteria</taxon>
        <taxon>Bacillati</taxon>
        <taxon>Bacillota</taxon>
        <taxon>Bacilli</taxon>
        <taxon>Bacillales</taxon>
        <taxon>Staphylococcaceae</taxon>
        <taxon>Staphylococcus</taxon>
    </lineage>
</organism>
<name>RL22_STAAM</name>
<proteinExistence type="inferred from homology"/>
<keyword id="KW-0687">Ribonucleoprotein</keyword>
<keyword id="KW-0689">Ribosomal protein</keyword>
<keyword id="KW-0694">RNA-binding</keyword>
<keyword id="KW-0699">rRNA-binding</keyword>
<evidence type="ECO:0000255" key="1">
    <source>
        <dbReference type="HAMAP-Rule" id="MF_01331"/>
    </source>
</evidence>
<evidence type="ECO:0000305" key="2"/>
<feature type="chain" id="PRO_0000125222" description="Large ribosomal subunit protein uL22">
    <location>
        <begin position="1"/>
        <end position="117"/>
    </location>
</feature>
<sequence>MEAKAVARTIRIAPRKVRLVLDLIRGKNAAEAIAILKLTNKASSPVIEKVLMSALANAEHNYDMNTDELVVKEAYANEGPTLKRFRPRAQGRASAINKRTSHITIVVSDGKEEAKEA</sequence>
<gene>
    <name evidence="1" type="primary">rplV</name>
    <name type="ordered locus">SAV2245</name>
</gene>